<name>RS2_RHILO</name>
<evidence type="ECO:0000255" key="1">
    <source>
        <dbReference type="HAMAP-Rule" id="MF_00291"/>
    </source>
</evidence>
<evidence type="ECO:0000305" key="2"/>
<sequence>MALPDFSMRQLLEAGIHFGHQTHRWNPKMAPYIYGARNNIHIIDLSQTVPLLHQALKQVSDTVAKGGRVLFVGTKRQASDIVADAAQRSAQYYVNSRWLGGMLTNWKTISNSIQRLRKLDEMLAGEAQGLTKKERLNLDREREKLDKALGGIKDMGSTPDLMFVIDTNKEAIAILEAKRLGIPVVAIIDSNCDPDKIDFPIPGNDDAARAIQLYCDLIAKAAIDGIARQQGALGVDIGASVEAPVEPALDPAPSTEAPQA</sequence>
<comment type="similarity">
    <text evidence="1">Belongs to the universal ribosomal protein uS2 family.</text>
</comment>
<keyword id="KW-0687">Ribonucleoprotein</keyword>
<keyword id="KW-0689">Ribosomal protein</keyword>
<dbReference type="EMBL" id="BA000012">
    <property type="protein sequence ID" value="BAB48201.1"/>
    <property type="molecule type" value="Genomic_DNA"/>
</dbReference>
<dbReference type="RefSeq" id="WP_010909556.1">
    <property type="nucleotide sequence ID" value="NC_002678.2"/>
</dbReference>
<dbReference type="SMR" id="Q98MB2"/>
<dbReference type="GeneID" id="66683979"/>
<dbReference type="KEGG" id="mlo:mll0651"/>
<dbReference type="eggNOG" id="COG0052">
    <property type="taxonomic scope" value="Bacteria"/>
</dbReference>
<dbReference type="HOGENOM" id="CLU_040318_2_1_5"/>
<dbReference type="Proteomes" id="UP000000552">
    <property type="component" value="Chromosome"/>
</dbReference>
<dbReference type="GO" id="GO:0022627">
    <property type="term" value="C:cytosolic small ribosomal subunit"/>
    <property type="evidence" value="ECO:0007669"/>
    <property type="project" value="TreeGrafter"/>
</dbReference>
<dbReference type="GO" id="GO:0003735">
    <property type="term" value="F:structural constituent of ribosome"/>
    <property type="evidence" value="ECO:0007669"/>
    <property type="project" value="InterPro"/>
</dbReference>
<dbReference type="GO" id="GO:0006412">
    <property type="term" value="P:translation"/>
    <property type="evidence" value="ECO:0007669"/>
    <property type="project" value="UniProtKB-UniRule"/>
</dbReference>
<dbReference type="CDD" id="cd01425">
    <property type="entry name" value="RPS2"/>
    <property type="match status" value="1"/>
</dbReference>
<dbReference type="FunFam" id="1.10.287.610:FF:000001">
    <property type="entry name" value="30S ribosomal protein S2"/>
    <property type="match status" value="1"/>
</dbReference>
<dbReference type="Gene3D" id="3.40.50.10490">
    <property type="entry name" value="Glucose-6-phosphate isomerase like protein, domain 1"/>
    <property type="match status" value="1"/>
</dbReference>
<dbReference type="Gene3D" id="1.10.287.610">
    <property type="entry name" value="Helix hairpin bin"/>
    <property type="match status" value="1"/>
</dbReference>
<dbReference type="HAMAP" id="MF_00291_B">
    <property type="entry name" value="Ribosomal_uS2_B"/>
    <property type="match status" value="1"/>
</dbReference>
<dbReference type="InterPro" id="IPR001865">
    <property type="entry name" value="Ribosomal_uS2"/>
</dbReference>
<dbReference type="InterPro" id="IPR005706">
    <property type="entry name" value="Ribosomal_uS2_bac/mit/plastid"/>
</dbReference>
<dbReference type="InterPro" id="IPR018130">
    <property type="entry name" value="Ribosomal_uS2_CS"/>
</dbReference>
<dbReference type="InterPro" id="IPR023591">
    <property type="entry name" value="Ribosomal_uS2_flav_dom_sf"/>
</dbReference>
<dbReference type="NCBIfam" id="TIGR01011">
    <property type="entry name" value="rpsB_bact"/>
    <property type="match status" value="1"/>
</dbReference>
<dbReference type="PANTHER" id="PTHR12534">
    <property type="entry name" value="30S RIBOSOMAL PROTEIN S2 PROKARYOTIC AND ORGANELLAR"/>
    <property type="match status" value="1"/>
</dbReference>
<dbReference type="PANTHER" id="PTHR12534:SF0">
    <property type="entry name" value="SMALL RIBOSOMAL SUBUNIT PROTEIN US2M"/>
    <property type="match status" value="1"/>
</dbReference>
<dbReference type="Pfam" id="PF00318">
    <property type="entry name" value="Ribosomal_S2"/>
    <property type="match status" value="1"/>
</dbReference>
<dbReference type="PRINTS" id="PR00395">
    <property type="entry name" value="RIBOSOMALS2"/>
</dbReference>
<dbReference type="SUPFAM" id="SSF52313">
    <property type="entry name" value="Ribosomal protein S2"/>
    <property type="match status" value="1"/>
</dbReference>
<dbReference type="PROSITE" id="PS00963">
    <property type="entry name" value="RIBOSOMAL_S2_2"/>
    <property type="match status" value="1"/>
</dbReference>
<proteinExistence type="inferred from homology"/>
<reference key="1">
    <citation type="journal article" date="2000" name="DNA Res.">
        <title>Complete genome structure of the nitrogen-fixing symbiotic bacterium Mesorhizobium loti.</title>
        <authorList>
            <person name="Kaneko T."/>
            <person name="Nakamura Y."/>
            <person name="Sato S."/>
            <person name="Asamizu E."/>
            <person name="Kato T."/>
            <person name="Sasamoto S."/>
            <person name="Watanabe A."/>
            <person name="Idesawa K."/>
            <person name="Ishikawa A."/>
            <person name="Kawashima K."/>
            <person name="Kimura T."/>
            <person name="Kishida Y."/>
            <person name="Kiyokawa C."/>
            <person name="Kohara M."/>
            <person name="Matsumoto M."/>
            <person name="Matsuno A."/>
            <person name="Mochizuki Y."/>
            <person name="Nakayama S."/>
            <person name="Nakazaki N."/>
            <person name="Shimpo S."/>
            <person name="Sugimoto M."/>
            <person name="Takeuchi C."/>
            <person name="Yamada M."/>
            <person name="Tabata S."/>
        </authorList>
    </citation>
    <scope>NUCLEOTIDE SEQUENCE [LARGE SCALE GENOMIC DNA]</scope>
    <source>
        <strain>LMG 29417 / CECT 9101 / MAFF 303099</strain>
    </source>
</reference>
<accession>Q98MB2</accession>
<protein>
    <recommendedName>
        <fullName evidence="1">Small ribosomal subunit protein uS2</fullName>
    </recommendedName>
    <alternativeName>
        <fullName evidence="2">30S ribosomal protein S2</fullName>
    </alternativeName>
</protein>
<gene>
    <name evidence="1" type="primary">rpsB</name>
    <name type="ordered locus">mll0651</name>
</gene>
<feature type="chain" id="PRO_0000134224" description="Small ribosomal subunit protein uS2">
    <location>
        <begin position="1"/>
        <end position="260"/>
    </location>
</feature>
<organism>
    <name type="scientific">Mesorhizobium japonicum (strain LMG 29417 / CECT 9101 / MAFF 303099)</name>
    <name type="common">Mesorhizobium loti (strain MAFF 303099)</name>
    <dbReference type="NCBI Taxonomy" id="266835"/>
    <lineage>
        <taxon>Bacteria</taxon>
        <taxon>Pseudomonadati</taxon>
        <taxon>Pseudomonadota</taxon>
        <taxon>Alphaproteobacteria</taxon>
        <taxon>Hyphomicrobiales</taxon>
        <taxon>Phyllobacteriaceae</taxon>
        <taxon>Mesorhizobium</taxon>
    </lineage>
</organism>